<dbReference type="EMBL" id="U00096">
    <property type="protein sequence ID" value="AAC74560.1"/>
    <property type="molecule type" value="Genomic_DNA"/>
</dbReference>
<dbReference type="EMBL" id="AP009048">
    <property type="protein sequence ID" value="BAA15142.2"/>
    <property type="molecule type" value="Genomic_DNA"/>
</dbReference>
<dbReference type="PIR" id="B64902">
    <property type="entry name" value="B64902"/>
</dbReference>
<dbReference type="RefSeq" id="NP_416004.1">
    <property type="nucleotide sequence ID" value="NC_000913.3"/>
</dbReference>
<dbReference type="RefSeq" id="WP_000830550.1">
    <property type="nucleotide sequence ID" value="NZ_SSZK01000038.1"/>
</dbReference>
<dbReference type="SMR" id="P76128"/>
<dbReference type="BioGRID" id="4261978">
    <property type="interactions" value="371"/>
</dbReference>
<dbReference type="ComplexPortal" id="CPX-4321">
    <property type="entry name" value="Dipeptide ABC transporter complex"/>
</dbReference>
<dbReference type="DIP" id="DIP-11672N"/>
<dbReference type="FunCoup" id="P76128">
    <property type="interactions" value="158"/>
</dbReference>
<dbReference type="IntAct" id="P76128">
    <property type="interactions" value="2"/>
</dbReference>
<dbReference type="STRING" id="511145.b1487"/>
<dbReference type="TCDB" id="3.A.1.5.38">
    <property type="family name" value="the atp-binding cassette (abc) superfamily"/>
</dbReference>
<dbReference type="jPOST" id="P76128"/>
<dbReference type="PaxDb" id="511145-b1487"/>
<dbReference type="EnsemblBacteria" id="AAC74560">
    <property type="protein sequence ID" value="AAC74560"/>
    <property type="gene ID" value="b1487"/>
</dbReference>
<dbReference type="GeneID" id="946052"/>
<dbReference type="KEGG" id="ecj:JW5240"/>
<dbReference type="KEGG" id="eco:b1487"/>
<dbReference type="KEGG" id="ecoc:C3026_08615"/>
<dbReference type="PATRIC" id="fig|1411691.4.peg.780"/>
<dbReference type="EchoBASE" id="EB3551"/>
<dbReference type="eggNOG" id="COG0747">
    <property type="taxonomic scope" value="Bacteria"/>
</dbReference>
<dbReference type="HOGENOM" id="CLU_017028_7_4_6"/>
<dbReference type="InParanoid" id="P76128"/>
<dbReference type="OMA" id="GMGWFPD"/>
<dbReference type="OrthoDB" id="9801912at2"/>
<dbReference type="PhylomeDB" id="P76128"/>
<dbReference type="BioCyc" id="EcoCyc:YDDS-MONOMER"/>
<dbReference type="PRO" id="PR:P76128"/>
<dbReference type="Proteomes" id="UP000000625">
    <property type="component" value="Chromosome"/>
</dbReference>
<dbReference type="GO" id="GO:0055052">
    <property type="term" value="C:ATP-binding cassette (ABC) transporter complex, substrate-binding subunit-containing"/>
    <property type="evidence" value="ECO:0000303"/>
    <property type="project" value="ComplexPortal"/>
</dbReference>
<dbReference type="GO" id="GO:0016020">
    <property type="term" value="C:membrane"/>
    <property type="evidence" value="ECO:0000303"/>
    <property type="project" value="ComplexPortal"/>
</dbReference>
<dbReference type="GO" id="GO:0030288">
    <property type="term" value="C:outer membrane-bounded periplasmic space"/>
    <property type="evidence" value="ECO:0000318"/>
    <property type="project" value="GO_Central"/>
</dbReference>
<dbReference type="GO" id="GO:1904680">
    <property type="term" value="F:peptide transmembrane transporter activity"/>
    <property type="evidence" value="ECO:0000318"/>
    <property type="project" value="GO_Central"/>
</dbReference>
<dbReference type="GO" id="GO:0042938">
    <property type="term" value="P:dipeptide transport"/>
    <property type="evidence" value="ECO:0000318"/>
    <property type="project" value="GO_Central"/>
</dbReference>
<dbReference type="GO" id="GO:0015031">
    <property type="term" value="P:protein transport"/>
    <property type="evidence" value="ECO:0007669"/>
    <property type="project" value="UniProtKB-KW"/>
</dbReference>
<dbReference type="CDD" id="cd08512">
    <property type="entry name" value="PBP2_NikA_DppA_OppA_like_7"/>
    <property type="match status" value="1"/>
</dbReference>
<dbReference type="Gene3D" id="3.90.76.10">
    <property type="entry name" value="Dipeptide-binding Protein, Domain 1"/>
    <property type="match status" value="1"/>
</dbReference>
<dbReference type="Gene3D" id="3.10.105.10">
    <property type="entry name" value="Dipeptide-binding Protein, Domain 3"/>
    <property type="match status" value="1"/>
</dbReference>
<dbReference type="Gene3D" id="3.40.190.10">
    <property type="entry name" value="Periplasmic binding protein-like II"/>
    <property type="match status" value="1"/>
</dbReference>
<dbReference type="InterPro" id="IPR030678">
    <property type="entry name" value="Peptide/Ni-bd"/>
</dbReference>
<dbReference type="InterPro" id="IPR039424">
    <property type="entry name" value="SBP_5"/>
</dbReference>
<dbReference type="InterPro" id="IPR023765">
    <property type="entry name" value="SBP_5_CS"/>
</dbReference>
<dbReference type="InterPro" id="IPR000914">
    <property type="entry name" value="SBP_5_dom"/>
</dbReference>
<dbReference type="PANTHER" id="PTHR30290:SF38">
    <property type="entry name" value="D,D-DIPEPTIDE-BINDING PERIPLASMIC PROTEIN DDPA-RELATED"/>
    <property type="match status" value="1"/>
</dbReference>
<dbReference type="PANTHER" id="PTHR30290">
    <property type="entry name" value="PERIPLASMIC BINDING COMPONENT OF ABC TRANSPORTER"/>
    <property type="match status" value="1"/>
</dbReference>
<dbReference type="Pfam" id="PF00496">
    <property type="entry name" value="SBP_bac_5"/>
    <property type="match status" value="1"/>
</dbReference>
<dbReference type="PIRSF" id="PIRSF002741">
    <property type="entry name" value="MppA"/>
    <property type="match status" value="1"/>
</dbReference>
<dbReference type="SUPFAM" id="SSF53850">
    <property type="entry name" value="Periplasmic binding protein-like II"/>
    <property type="match status" value="1"/>
</dbReference>
<dbReference type="PROSITE" id="PS01040">
    <property type="entry name" value="SBP_BACTERIAL_5"/>
    <property type="match status" value="1"/>
</dbReference>
<protein>
    <recommendedName>
        <fullName>Probable D,D-dipeptide-binding periplasmic protein DdpA</fullName>
    </recommendedName>
</protein>
<accession>P76128</accession>
<accession>P76874</accession>
<accession>P77769</accession>
<sequence length="516" mass="57641">MKRSISFRPTLLALVLATNFPVAHAAVPKDMLVIGKAADPQTLDPAVTIDNNDWTVTYPSYQRLVQYKTDGDKGSTDVEGDLASSWKASDDQKEWTFTLKDNAKFADGTPVTAEAVKLSFERLLKIGQGPAEAFPKDLKIDAPDEHTVKFTLSQPFAPFLYTLANDGASIINPAVLKEHAADDARGFLAQNTAGSGPFMLKSWQKGQQLVLVPNPHYPGNKPNFKRVSVKIIGESASRRLQLSRGDIDIADALPVDQLNALKQENKVNVAEYPSLRVTYLYLNNSKAPLNQADLRRAISWSTDYQGMVNGILSGNGKQMRGPIPEGMWGYDATAMQYNHDETKAKAEWDKVTSKPTSLTFLYSDNDPNWEPIALATQSSLNKLGIIVKLEKLANATMRDRVGKGDYDIAIGNWSPDFADPYMFMNYWFESDKKGLPGNRSFYENSEVDKLLRNALATTDQTQRTRDYQQAQKIVIDDAAYVYLFQKNYQLAMNKEVKGFVFNPMLEQVFNINTMSK</sequence>
<gene>
    <name type="primary">ddpA</name>
    <name type="synonym">yddS</name>
    <name type="ordered locus">b1487</name>
    <name type="ordered locus">JW5240</name>
</gene>
<keyword id="KW-0571">Peptide transport</keyword>
<keyword id="KW-0574">Periplasm</keyword>
<keyword id="KW-0653">Protein transport</keyword>
<keyword id="KW-1185">Reference proteome</keyword>
<keyword id="KW-0732">Signal</keyword>
<keyword id="KW-0813">Transport</keyword>
<proteinExistence type="evidence at transcript level"/>
<evidence type="ECO:0000255" key="1"/>
<evidence type="ECO:0000269" key="2">
    <source>
    </source>
</evidence>
<evidence type="ECO:0000305" key="3"/>
<feature type="signal peptide" evidence="1">
    <location>
        <begin position="1"/>
        <end position="25"/>
    </location>
</feature>
<feature type="chain" id="PRO_0000031805" description="Probable D,D-dipeptide-binding periplasmic protein DdpA">
    <location>
        <begin position="26"/>
        <end position="516"/>
    </location>
</feature>
<comment type="function">
    <text>Part of the ABC transporter complex DdpABCDF, which is probably involved in D,D-dipeptide transport.</text>
</comment>
<comment type="subunit">
    <text evidence="3">The complex is composed of two ATP-binding proteins (DdpD and DdpF), two transmembrane proteins (DdpB and DdpC) and a solute-binding protein (DdpA).</text>
</comment>
<comment type="subcellular location">
    <subcellularLocation>
        <location evidence="3">Periplasm</location>
    </subcellularLocation>
</comment>
<comment type="induction">
    <text evidence="2">Induced by RpoS in stationary phase.</text>
</comment>
<comment type="similarity">
    <text evidence="3">Belongs to the bacterial solute-binding protein 5 family.</text>
</comment>
<name>DDPA_ECOLI</name>
<reference key="1">
    <citation type="journal article" date="1996" name="DNA Res.">
        <title>A 570-kb DNA sequence of the Escherichia coli K-12 genome corresponding to the 28.0-40.1 min region on the linkage map.</title>
        <authorList>
            <person name="Aiba H."/>
            <person name="Baba T."/>
            <person name="Fujita K."/>
            <person name="Hayashi K."/>
            <person name="Inada T."/>
            <person name="Isono K."/>
            <person name="Itoh T."/>
            <person name="Kasai H."/>
            <person name="Kashimoto K."/>
            <person name="Kimura S."/>
            <person name="Kitakawa M."/>
            <person name="Kitagawa M."/>
            <person name="Makino K."/>
            <person name="Miki T."/>
            <person name="Mizobuchi K."/>
            <person name="Mori H."/>
            <person name="Mori T."/>
            <person name="Motomura K."/>
            <person name="Nakade S."/>
            <person name="Nakamura Y."/>
            <person name="Nashimoto H."/>
            <person name="Nishio Y."/>
            <person name="Oshima T."/>
            <person name="Saito N."/>
            <person name="Sampei G."/>
            <person name="Seki Y."/>
            <person name="Sivasundaram S."/>
            <person name="Tagami H."/>
            <person name="Takeda J."/>
            <person name="Takemoto K."/>
            <person name="Takeuchi Y."/>
            <person name="Wada C."/>
            <person name="Yamamoto Y."/>
            <person name="Horiuchi T."/>
        </authorList>
    </citation>
    <scope>NUCLEOTIDE SEQUENCE [LARGE SCALE GENOMIC DNA]</scope>
    <source>
        <strain>K12 / W3110 / ATCC 27325 / DSM 5911</strain>
    </source>
</reference>
<reference key="2">
    <citation type="journal article" date="1997" name="Science">
        <title>The complete genome sequence of Escherichia coli K-12.</title>
        <authorList>
            <person name="Blattner F.R."/>
            <person name="Plunkett G. III"/>
            <person name="Bloch C.A."/>
            <person name="Perna N.T."/>
            <person name="Burland V."/>
            <person name="Riley M."/>
            <person name="Collado-Vides J."/>
            <person name="Glasner J.D."/>
            <person name="Rode C.K."/>
            <person name="Mayhew G.F."/>
            <person name="Gregor J."/>
            <person name="Davis N.W."/>
            <person name="Kirkpatrick H.A."/>
            <person name="Goeden M.A."/>
            <person name="Rose D.J."/>
            <person name="Mau B."/>
            <person name="Shao Y."/>
        </authorList>
    </citation>
    <scope>NUCLEOTIDE SEQUENCE [LARGE SCALE GENOMIC DNA]</scope>
    <source>
        <strain>K12 / MG1655 / ATCC 47076</strain>
    </source>
</reference>
<reference key="3">
    <citation type="journal article" date="2006" name="Mol. Syst. Biol.">
        <title>Highly accurate genome sequences of Escherichia coli K-12 strains MG1655 and W3110.</title>
        <authorList>
            <person name="Hayashi K."/>
            <person name="Morooka N."/>
            <person name="Yamamoto Y."/>
            <person name="Fujita K."/>
            <person name="Isono K."/>
            <person name="Choi S."/>
            <person name="Ohtsubo E."/>
            <person name="Baba T."/>
            <person name="Wanner B.L."/>
            <person name="Mori H."/>
            <person name="Horiuchi T."/>
        </authorList>
    </citation>
    <scope>NUCLEOTIDE SEQUENCE [LARGE SCALE GENOMIC DNA]</scope>
    <source>
        <strain>K12 / W3110 / ATCC 27325 / DSM 5911</strain>
    </source>
</reference>
<reference key="4">
    <citation type="journal article" date="1998" name="Chem. Biol.">
        <title>Homologs of the vancomycin resistance D-Ala-D-Ala dipeptidase VanX in Streptomyces toyocaensis, Escherichia coli and Synechocystis: attributes of catalytic efficiency, stereoselectivity and regulation with implications for function.</title>
        <authorList>
            <person name="Lessard I.A.D."/>
            <person name="Pratt S.D."/>
            <person name="McCafferty D.G."/>
            <person name="Bussiere D.E."/>
            <person name="Hutchins C."/>
            <person name="Wanner B.L."/>
            <person name="Katz L."/>
            <person name="Walsh C.T."/>
        </authorList>
    </citation>
    <scope>INDUCTION</scope>
</reference>
<reference key="5">
    <citation type="journal article" date="1999" name="Proc. Natl. Acad. Sci. U.S.A.">
        <title>VanX, a bacterial D-alanyl-D-alanine dipeptidase: resistance, immunity, or survival function?</title>
        <authorList>
            <person name="Lessard I.A.D."/>
            <person name="Walsh C.T."/>
        </authorList>
    </citation>
    <scope>GENE NAME</scope>
</reference>
<organism>
    <name type="scientific">Escherichia coli (strain K12)</name>
    <dbReference type="NCBI Taxonomy" id="83333"/>
    <lineage>
        <taxon>Bacteria</taxon>
        <taxon>Pseudomonadati</taxon>
        <taxon>Pseudomonadota</taxon>
        <taxon>Gammaproteobacteria</taxon>
        <taxon>Enterobacterales</taxon>
        <taxon>Enterobacteriaceae</taxon>
        <taxon>Escherichia</taxon>
    </lineage>
</organism>